<name>EFTS_RICPR</name>
<comment type="function">
    <text evidence="1">Associates with the EF-Tu.GDP complex and induces the exchange of GDP to GTP. It remains bound to the aminoacyl-tRNA.EF-Tu.GTP complex up to the GTP hydrolysis stage on the ribosome (By similarity).</text>
</comment>
<comment type="subcellular location">
    <subcellularLocation>
        <location evidence="1">Cytoplasm</location>
    </subcellularLocation>
</comment>
<comment type="similarity">
    <text evidence="2">Belongs to the EF-Ts family.</text>
</comment>
<evidence type="ECO:0000250" key="1"/>
<evidence type="ECO:0000305" key="2"/>
<feature type="chain" id="PRO_0000161185" description="Elongation factor Ts">
    <location>
        <begin position="1"/>
        <end position="309"/>
    </location>
</feature>
<feature type="region of interest" description="Involved in Mg(2+) ion dislocation from EF-Tu" evidence="1">
    <location>
        <begin position="82"/>
        <end position="85"/>
    </location>
</feature>
<sequence>MSEINISAVVVKELREKTGAGMMDCKKALIETSGNFEEAIDFLRKKGLAAAVKKSGRIASEGLTAVKVDGLISAVIEVNSETDFVARNKQFQDLVKDIVNLAIIAQNIDTLKISKMQSGKSVEEEIIDNIAIIGENLTLRRMDILEISNGAIGSYVHNEVVPHLGKISVLVGLESNAKDKVKLEALAKQIAVHVAGNNPQSIDTLSLDKSLIEREKKVFFEKSKEEGKPNHIIEKMVEGRIRKFFSEVVLLHQNFLFEPKLTVAEVIKNAEQELSAEIKITKFIRYALGEGIEHAEKNFADEVAAITQC</sequence>
<reference key="1">
    <citation type="journal article" date="1998" name="Nature">
        <title>The genome sequence of Rickettsia prowazekii and the origin of mitochondria.</title>
        <authorList>
            <person name="Andersson S.G.E."/>
            <person name="Zomorodipour A."/>
            <person name="Andersson J.O."/>
            <person name="Sicheritz-Ponten T."/>
            <person name="Alsmark U.C.M."/>
            <person name="Podowski R.M."/>
            <person name="Naeslund A.K."/>
            <person name="Eriksson A.-S."/>
            <person name="Winkler H.H."/>
            <person name="Kurland C.G."/>
        </authorList>
    </citation>
    <scope>NUCLEOTIDE SEQUENCE [LARGE SCALE GENOMIC DNA]</scope>
    <source>
        <strain>Madrid E</strain>
    </source>
</reference>
<proteinExistence type="inferred from homology"/>
<dbReference type="EMBL" id="AJ235270">
    <property type="protein sequence ID" value="CAA14557.1"/>
    <property type="molecule type" value="Genomic_DNA"/>
</dbReference>
<dbReference type="PIR" id="F71717">
    <property type="entry name" value="F71717"/>
</dbReference>
<dbReference type="RefSeq" id="NP_220480.1">
    <property type="nucleotide sequence ID" value="NC_000963.1"/>
</dbReference>
<dbReference type="RefSeq" id="WP_004599734.1">
    <property type="nucleotide sequence ID" value="NC_000963.1"/>
</dbReference>
<dbReference type="SMR" id="Q9ZE60"/>
<dbReference type="STRING" id="272947.gene:17555170"/>
<dbReference type="EnsemblBacteria" id="CAA14557">
    <property type="protein sequence ID" value="CAA14557"/>
    <property type="gene ID" value="CAA14557"/>
</dbReference>
<dbReference type="GeneID" id="57569214"/>
<dbReference type="KEGG" id="rpr:RP087"/>
<dbReference type="PATRIC" id="fig|272947.5.peg.87"/>
<dbReference type="eggNOG" id="COG0264">
    <property type="taxonomic scope" value="Bacteria"/>
</dbReference>
<dbReference type="HOGENOM" id="CLU_047155_2_0_5"/>
<dbReference type="OrthoDB" id="9808348at2"/>
<dbReference type="Proteomes" id="UP000002480">
    <property type="component" value="Chromosome"/>
</dbReference>
<dbReference type="GO" id="GO:0005737">
    <property type="term" value="C:cytoplasm"/>
    <property type="evidence" value="ECO:0007669"/>
    <property type="project" value="UniProtKB-SubCell"/>
</dbReference>
<dbReference type="GO" id="GO:0003746">
    <property type="term" value="F:translation elongation factor activity"/>
    <property type="evidence" value="ECO:0007669"/>
    <property type="project" value="UniProtKB-UniRule"/>
</dbReference>
<dbReference type="CDD" id="cd14275">
    <property type="entry name" value="UBA_EF-Ts"/>
    <property type="match status" value="1"/>
</dbReference>
<dbReference type="FunFam" id="1.10.286.20:FF:000001">
    <property type="entry name" value="Elongation factor Ts"/>
    <property type="match status" value="1"/>
</dbReference>
<dbReference type="FunFam" id="1.10.8.10:FF:000001">
    <property type="entry name" value="Elongation factor Ts"/>
    <property type="match status" value="1"/>
</dbReference>
<dbReference type="Gene3D" id="1.10.286.20">
    <property type="match status" value="1"/>
</dbReference>
<dbReference type="Gene3D" id="1.10.8.10">
    <property type="entry name" value="DNA helicase RuvA subunit, C-terminal domain"/>
    <property type="match status" value="1"/>
</dbReference>
<dbReference type="Gene3D" id="3.30.479.20">
    <property type="entry name" value="Elongation factor Ts, dimerisation domain"/>
    <property type="match status" value="2"/>
</dbReference>
<dbReference type="HAMAP" id="MF_00050">
    <property type="entry name" value="EF_Ts"/>
    <property type="match status" value="1"/>
</dbReference>
<dbReference type="InterPro" id="IPR036402">
    <property type="entry name" value="EF-Ts_dimer_sf"/>
</dbReference>
<dbReference type="InterPro" id="IPR001816">
    <property type="entry name" value="Transl_elong_EFTs/EF1B"/>
</dbReference>
<dbReference type="InterPro" id="IPR014039">
    <property type="entry name" value="Transl_elong_EFTs/EF1B_dimer"/>
</dbReference>
<dbReference type="InterPro" id="IPR018101">
    <property type="entry name" value="Transl_elong_Ts_CS"/>
</dbReference>
<dbReference type="InterPro" id="IPR009060">
    <property type="entry name" value="UBA-like_sf"/>
</dbReference>
<dbReference type="NCBIfam" id="TIGR00116">
    <property type="entry name" value="tsf"/>
    <property type="match status" value="1"/>
</dbReference>
<dbReference type="PANTHER" id="PTHR11741">
    <property type="entry name" value="ELONGATION FACTOR TS"/>
    <property type="match status" value="1"/>
</dbReference>
<dbReference type="PANTHER" id="PTHR11741:SF0">
    <property type="entry name" value="ELONGATION FACTOR TS, MITOCHONDRIAL"/>
    <property type="match status" value="1"/>
</dbReference>
<dbReference type="Pfam" id="PF00889">
    <property type="entry name" value="EF_TS"/>
    <property type="match status" value="1"/>
</dbReference>
<dbReference type="SUPFAM" id="SSF54713">
    <property type="entry name" value="Elongation factor Ts (EF-Ts), dimerisation domain"/>
    <property type="match status" value="2"/>
</dbReference>
<dbReference type="SUPFAM" id="SSF46934">
    <property type="entry name" value="UBA-like"/>
    <property type="match status" value="1"/>
</dbReference>
<dbReference type="PROSITE" id="PS01126">
    <property type="entry name" value="EF_TS_1"/>
    <property type="match status" value="1"/>
</dbReference>
<dbReference type="PROSITE" id="PS01127">
    <property type="entry name" value="EF_TS_2"/>
    <property type="match status" value="1"/>
</dbReference>
<accession>Q9ZE60</accession>
<organism>
    <name type="scientific">Rickettsia prowazekii (strain Madrid E)</name>
    <dbReference type="NCBI Taxonomy" id="272947"/>
    <lineage>
        <taxon>Bacteria</taxon>
        <taxon>Pseudomonadati</taxon>
        <taxon>Pseudomonadota</taxon>
        <taxon>Alphaproteobacteria</taxon>
        <taxon>Rickettsiales</taxon>
        <taxon>Rickettsiaceae</taxon>
        <taxon>Rickettsieae</taxon>
        <taxon>Rickettsia</taxon>
        <taxon>typhus group</taxon>
    </lineage>
</organism>
<gene>
    <name type="primary">tsf</name>
    <name type="ordered locus">RP087</name>
</gene>
<protein>
    <recommendedName>
        <fullName>Elongation factor Ts</fullName>
        <shortName>EF-Ts</shortName>
    </recommendedName>
</protein>
<keyword id="KW-0963">Cytoplasm</keyword>
<keyword id="KW-0251">Elongation factor</keyword>
<keyword id="KW-0648">Protein biosynthesis</keyword>
<keyword id="KW-1185">Reference proteome</keyword>